<feature type="chain" id="PRO_0000242108" description="Arginine--tRNA ligase">
    <location>
        <begin position="1"/>
        <end position="584"/>
    </location>
</feature>
<feature type="short sequence motif" description="'HIGH' region">
    <location>
        <begin position="126"/>
        <end position="136"/>
    </location>
</feature>
<accession>Q5N643</accession>
<protein>
    <recommendedName>
        <fullName evidence="1">Arginine--tRNA ligase</fullName>
        <ecNumber evidence="1">6.1.1.19</ecNumber>
    </recommendedName>
    <alternativeName>
        <fullName evidence="1">Arginyl-tRNA synthetase</fullName>
        <shortName evidence="1">ArgRS</shortName>
    </alternativeName>
</protein>
<proteinExistence type="inferred from homology"/>
<dbReference type="EC" id="6.1.1.19" evidence="1"/>
<dbReference type="EMBL" id="AP008231">
    <property type="protein sequence ID" value="BAD78224.1"/>
    <property type="molecule type" value="Genomic_DNA"/>
</dbReference>
<dbReference type="RefSeq" id="WP_011242347.1">
    <property type="nucleotide sequence ID" value="NC_006576.1"/>
</dbReference>
<dbReference type="SMR" id="Q5N643"/>
<dbReference type="KEGG" id="syc:syc0034_c"/>
<dbReference type="eggNOG" id="COG0018">
    <property type="taxonomic scope" value="Bacteria"/>
</dbReference>
<dbReference type="Proteomes" id="UP000001175">
    <property type="component" value="Chromosome"/>
</dbReference>
<dbReference type="GO" id="GO:0005737">
    <property type="term" value="C:cytoplasm"/>
    <property type="evidence" value="ECO:0007669"/>
    <property type="project" value="UniProtKB-SubCell"/>
</dbReference>
<dbReference type="GO" id="GO:0004814">
    <property type="term" value="F:arginine-tRNA ligase activity"/>
    <property type="evidence" value="ECO:0007669"/>
    <property type="project" value="UniProtKB-UniRule"/>
</dbReference>
<dbReference type="GO" id="GO:0005524">
    <property type="term" value="F:ATP binding"/>
    <property type="evidence" value="ECO:0007669"/>
    <property type="project" value="UniProtKB-UniRule"/>
</dbReference>
<dbReference type="GO" id="GO:0006420">
    <property type="term" value="P:arginyl-tRNA aminoacylation"/>
    <property type="evidence" value="ECO:0007669"/>
    <property type="project" value="UniProtKB-UniRule"/>
</dbReference>
<dbReference type="CDD" id="cd07956">
    <property type="entry name" value="Anticodon_Ia_Arg"/>
    <property type="match status" value="1"/>
</dbReference>
<dbReference type="CDD" id="cd00671">
    <property type="entry name" value="ArgRS_core"/>
    <property type="match status" value="1"/>
</dbReference>
<dbReference type="FunFam" id="3.40.50.620:FF:000030">
    <property type="entry name" value="Arginine--tRNA ligase"/>
    <property type="match status" value="1"/>
</dbReference>
<dbReference type="FunFam" id="1.10.730.10:FF:000006">
    <property type="entry name" value="Arginyl-tRNA synthetase 2, mitochondrial"/>
    <property type="match status" value="1"/>
</dbReference>
<dbReference type="Gene3D" id="3.30.1360.70">
    <property type="entry name" value="Arginyl tRNA synthetase N-terminal domain"/>
    <property type="match status" value="1"/>
</dbReference>
<dbReference type="Gene3D" id="3.40.50.620">
    <property type="entry name" value="HUPs"/>
    <property type="match status" value="1"/>
</dbReference>
<dbReference type="Gene3D" id="1.10.730.10">
    <property type="entry name" value="Isoleucyl-tRNA Synthetase, Domain 1"/>
    <property type="match status" value="1"/>
</dbReference>
<dbReference type="HAMAP" id="MF_00123">
    <property type="entry name" value="Arg_tRNA_synth"/>
    <property type="match status" value="1"/>
</dbReference>
<dbReference type="InterPro" id="IPR001412">
    <property type="entry name" value="aa-tRNA-synth_I_CS"/>
</dbReference>
<dbReference type="InterPro" id="IPR001278">
    <property type="entry name" value="Arg-tRNA-ligase"/>
</dbReference>
<dbReference type="InterPro" id="IPR005148">
    <property type="entry name" value="Arg-tRNA-synth_N"/>
</dbReference>
<dbReference type="InterPro" id="IPR036695">
    <property type="entry name" value="Arg-tRNA-synth_N_sf"/>
</dbReference>
<dbReference type="InterPro" id="IPR035684">
    <property type="entry name" value="ArgRS_core"/>
</dbReference>
<dbReference type="InterPro" id="IPR008909">
    <property type="entry name" value="DALR_anticod-bd"/>
</dbReference>
<dbReference type="InterPro" id="IPR014729">
    <property type="entry name" value="Rossmann-like_a/b/a_fold"/>
</dbReference>
<dbReference type="InterPro" id="IPR009080">
    <property type="entry name" value="tRNAsynth_Ia_anticodon-bd"/>
</dbReference>
<dbReference type="NCBIfam" id="TIGR00456">
    <property type="entry name" value="argS"/>
    <property type="match status" value="1"/>
</dbReference>
<dbReference type="PANTHER" id="PTHR11956:SF5">
    <property type="entry name" value="ARGININE--TRNA LIGASE, CYTOPLASMIC"/>
    <property type="match status" value="1"/>
</dbReference>
<dbReference type="PANTHER" id="PTHR11956">
    <property type="entry name" value="ARGINYL-TRNA SYNTHETASE"/>
    <property type="match status" value="1"/>
</dbReference>
<dbReference type="Pfam" id="PF03485">
    <property type="entry name" value="Arg_tRNA_synt_N"/>
    <property type="match status" value="1"/>
</dbReference>
<dbReference type="Pfam" id="PF05746">
    <property type="entry name" value="DALR_1"/>
    <property type="match status" value="1"/>
</dbReference>
<dbReference type="Pfam" id="PF00750">
    <property type="entry name" value="tRNA-synt_1d"/>
    <property type="match status" value="1"/>
</dbReference>
<dbReference type="PRINTS" id="PR01038">
    <property type="entry name" value="TRNASYNTHARG"/>
</dbReference>
<dbReference type="SMART" id="SM01016">
    <property type="entry name" value="Arg_tRNA_synt_N"/>
    <property type="match status" value="1"/>
</dbReference>
<dbReference type="SMART" id="SM00836">
    <property type="entry name" value="DALR_1"/>
    <property type="match status" value="1"/>
</dbReference>
<dbReference type="SUPFAM" id="SSF47323">
    <property type="entry name" value="Anticodon-binding domain of a subclass of class I aminoacyl-tRNA synthetases"/>
    <property type="match status" value="1"/>
</dbReference>
<dbReference type="SUPFAM" id="SSF55190">
    <property type="entry name" value="Arginyl-tRNA synthetase (ArgRS), N-terminal 'additional' domain"/>
    <property type="match status" value="1"/>
</dbReference>
<dbReference type="SUPFAM" id="SSF52374">
    <property type="entry name" value="Nucleotidylyl transferase"/>
    <property type="match status" value="1"/>
</dbReference>
<dbReference type="PROSITE" id="PS00178">
    <property type="entry name" value="AA_TRNA_LIGASE_I"/>
    <property type="match status" value="1"/>
</dbReference>
<reference key="1">
    <citation type="journal article" date="2007" name="Photosyn. Res.">
        <title>Complete nucleotide sequence of the freshwater unicellular cyanobacterium Synechococcus elongatus PCC 6301 chromosome: gene content and organization.</title>
        <authorList>
            <person name="Sugita C."/>
            <person name="Ogata K."/>
            <person name="Shikata M."/>
            <person name="Jikuya H."/>
            <person name="Takano J."/>
            <person name="Furumichi M."/>
            <person name="Kanehisa M."/>
            <person name="Omata T."/>
            <person name="Sugiura M."/>
            <person name="Sugita M."/>
        </authorList>
    </citation>
    <scope>NUCLEOTIDE SEQUENCE [LARGE SCALE GENOMIC DNA]</scope>
    <source>
        <strain>ATCC 27144 / PCC 6301 / SAUG 1402/1</strain>
    </source>
</reference>
<gene>
    <name evidence="1" type="primary">argS</name>
    <name type="ordered locus">syc0034_c</name>
</gene>
<evidence type="ECO:0000255" key="1">
    <source>
        <dbReference type="HAMAP-Rule" id="MF_00123"/>
    </source>
</evidence>
<keyword id="KW-0030">Aminoacyl-tRNA synthetase</keyword>
<keyword id="KW-0067">ATP-binding</keyword>
<keyword id="KW-0963">Cytoplasm</keyword>
<keyword id="KW-0436">Ligase</keyword>
<keyword id="KW-0547">Nucleotide-binding</keyword>
<keyword id="KW-0648">Protein biosynthesis</keyword>
<name>SYR_SYNP6</name>
<sequence>MAAPLAQLRDRFQAALAASFGPEWAATDPLLVPATNPKFGDYQSNVAMSLAKQLGQPPRAIAETLVQNLNLADLCEPPAIAGPGFINFTLQPSYLVAQLQQLQTDERLGIQPVSPPQRVIVDFSSPNIAKEMHVGHLRSTIIGDSIARVLEFQGHEVLRLNHVGDWGTQFGMLIAFLQEQYPQALSQPDALDISDLVAFYKQAKARFDEDPSFQETARQRVVDLQSGEATARQAWQLLCDQSRREFQKIYDRLDIQLEERGESFYNPYLPAIVEDLRRLGLLVEDQGAQCVFLEGFQNKEGQPLPLIVQKSDGGYNYATTDLAALRYRLGQDQAQRIIYVTDSGQANHFAQVFQVAQRAGWLPAAAQIEHVPFGLVQGEDGKKLKTRAGDTVRLRDLLDEAVDRARTDLTTRIAAEERSETPEFIEAVAQAVGLGAVKYADLSQNRNSNYIFSFDKMLALQGNTAPYLLYAYVRIQGIARKGGIDFAQLDPVAAELTEPTERSLAKQVLQLGEVLDEVARDLLPNRLCSYLFELSQTFNQFYDRCPILNAEEPQRTSRLLLCDLTARTLKLGLSLLGISVLERM</sequence>
<organism>
    <name type="scientific">Synechococcus sp. (strain ATCC 27144 / PCC 6301 / SAUG 1402/1)</name>
    <name type="common">Anacystis nidulans</name>
    <dbReference type="NCBI Taxonomy" id="269084"/>
    <lineage>
        <taxon>Bacteria</taxon>
        <taxon>Bacillati</taxon>
        <taxon>Cyanobacteriota</taxon>
        <taxon>Cyanophyceae</taxon>
        <taxon>Synechococcales</taxon>
        <taxon>Synechococcaceae</taxon>
        <taxon>Synechococcus</taxon>
    </lineage>
</organism>
<comment type="catalytic activity">
    <reaction evidence="1">
        <text>tRNA(Arg) + L-arginine + ATP = L-arginyl-tRNA(Arg) + AMP + diphosphate</text>
        <dbReference type="Rhea" id="RHEA:20301"/>
        <dbReference type="Rhea" id="RHEA-COMP:9658"/>
        <dbReference type="Rhea" id="RHEA-COMP:9673"/>
        <dbReference type="ChEBI" id="CHEBI:30616"/>
        <dbReference type="ChEBI" id="CHEBI:32682"/>
        <dbReference type="ChEBI" id="CHEBI:33019"/>
        <dbReference type="ChEBI" id="CHEBI:78442"/>
        <dbReference type="ChEBI" id="CHEBI:78513"/>
        <dbReference type="ChEBI" id="CHEBI:456215"/>
        <dbReference type="EC" id="6.1.1.19"/>
    </reaction>
</comment>
<comment type="subunit">
    <text evidence="1">Monomer.</text>
</comment>
<comment type="subcellular location">
    <subcellularLocation>
        <location evidence="1">Cytoplasm</location>
    </subcellularLocation>
</comment>
<comment type="similarity">
    <text evidence="1">Belongs to the class-I aminoacyl-tRNA synthetase family.</text>
</comment>